<keyword id="KW-0119">Carbohydrate metabolism</keyword>
<keyword id="KW-0448">Lipopolysaccharide biosynthesis</keyword>
<keyword id="KW-0460">Magnesium</keyword>
<keyword id="KW-0479">Metal-binding</keyword>
<keyword id="KW-0520">NAD</keyword>
<keyword id="KW-0521">NADP</keyword>
<keyword id="KW-0560">Oxidoreductase</keyword>
<keyword id="KW-1185">Reference proteome</keyword>
<gene>
    <name evidence="4" type="primary">rfbD</name>
    <name type="ordered locus">SF2103</name>
    <name type="ordered locus">S2226</name>
</gene>
<protein>
    <recommendedName>
        <fullName evidence="1">dTDP-4-dehydrorhamnose reductase</fullName>
        <ecNumber evidence="1">1.1.1.133</ecNumber>
    </recommendedName>
    <alternativeName>
        <fullName evidence="1">dTDP-4-keto-L-rhamnose reductase</fullName>
    </alternativeName>
    <alternativeName>
        <fullName evidence="1">dTDP-6-deoxy-L-lyxo-4-hexulose reductase</fullName>
    </alternativeName>
    <alternativeName>
        <fullName evidence="1">dTDP-6-deoxy-L-mannose dehydrogenase</fullName>
    </alternativeName>
    <alternativeName>
        <fullName evidence="1">dTDP-L-rhamnose synthase</fullName>
    </alternativeName>
</protein>
<comment type="function">
    <text evidence="1 3">Involved in the biosynthesis of the dTDP-L-rhamnose which is an important component of lipopolysaccharide (LPS) (PubMed:8170390). Catalyzes the reduction of dTDP-6-deoxy-L-lyxo-4-hexulose to yield dTDP-L-rhamnose (By similarity). RmlD uses NADH and NADPH nearly equally well (By similarity).</text>
</comment>
<comment type="catalytic activity">
    <reaction evidence="1">
        <text>dTDP-beta-L-rhamnose + NADP(+) = dTDP-4-dehydro-beta-L-rhamnose + NADPH + H(+)</text>
        <dbReference type="Rhea" id="RHEA:21796"/>
        <dbReference type="ChEBI" id="CHEBI:15378"/>
        <dbReference type="ChEBI" id="CHEBI:57510"/>
        <dbReference type="ChEBI" id="CHEBI:57783"/>
        <dbReference type="ChEBI" id="CHEBI:58349"/>
        <dbReference type="ChEBI" id="CHEBI:62830"/>
        <dbReference type="EC" id="1.1.1.133"/>
    </reaction>
</comment>
<comment type="cofactor">
    <cofactor evidence="1">
        <name>Mg(2+)</name>
        <dbReference type="ChEBI" id="CHEBI:18420"/>
    </cofactor>
    <text evidence="1">Binds 1 Mg(2+) ion per monomer.</text>
</comment>
<comment type="pathway">
    <text evidence="6">Carbohydrate biosynthesis; dTDP-L-rhamnose biosynthesis.</text>
</comment>
<comment type="pathway">
    <text evidence="2">Bacterial outer membrane biogenesis; LPS O-antigen biosynthesis.</text>
</comment>
<comment type="subunit">
    <text evidence="1">Homodimer.</text>
</comment>
<comment type="similarity">
    <text evidence="5">Belongs to the dTDP-4-dehydrorhamnose reductase family.</text>
</comment>
<reference key="1">
    <citation type="journal article" date="1994" name="Mol. Microbiol.">
        <title>Characterization of the dTDP-rhamnose biosynthetic genes encoded in the rfb locus of Shigella flexneri.</title>
        <authorList>
            <person name="Macpherson D.F."/>
            <person name="Manning P.A."/>
            <person name="Morona R."/>
        </authorList>
    </citation>
    <scope>NUCLEOTIDE SEQUENCE [GENOMIC DNA]</scope>
    <scope>FUNCTION IN DTDP-RHAMNOSE BIOSYNTHESIS</scope>
    <scope>PATHWAY</scope>
    <source>
        <strain>PE577 / Serotype 2a</strain>
    </source>
</reference>
<reference key="2">
    <citation type="journal article" date="1994" name="J. Bacteriol.">
        <title>Nucleotide sequence of the rhamnose biosynthetic operon of Shigella flexneri 2a and role of lipopolysaccharide in virulence.</title>
        <authorList>
            <person name="Rajakumar K."/>
            <person name="Jost B.H."/>
            <person name="Sasakawa C."/>
            <person name="Okada N."/>
            <person name="Yoshikawa M."/>
            <person name="Adler B."/>
        </authorList>
    </citation>
    <scope>NUCLEOTIDE SEQUENCE [GENOMIC DNA]</scope>
    <source>
        <strain>YSH6200 / Serotype 2a</strain>
    </source>
</reference>
<reference key="3">
    <citation type="journal article" date="2002" name="Nucleic Acids Res.">
        <title>Genome sequence of Shigella flexneri 2a: insights into pathogenicity through comparison with genomes of Escherichia coli K12 and O157.</title>
        <authorList>
            <person name="Jin Q."/>
            <person name="Yuan Z."/>
            <person name="Xu J."/>
            <person name="Wang Y."/>
            <person name="Shen Y."/>
            <person name="Lu W."/>
            <person name="Wang J."/>
            <person name="Liu H."/>
            <person name="Yang J."/>
            <person name="Yang F."/>
            <person name="Zhang X."/>
            <person name="Zhang J."/>
            <person name="Yang G."/>
            <person name="Wu H."/>
            <person name="Qu D."/>
            <person name="Dong J."/>
            <person name="Sun L."/>
            <person name="Xue Y."/>
            <person name="Zhao A."/>
            <person name="Gao Y."/>
            <person name="Zhu J."/>
            <person name="Kan B."/>
            <person name="Ding K."/>
            <person name="Chen S."/>
            <person name="Cheng H."/>
            <person name="Yao Z."/>
            <person name="He B."/>
            <person name="Chen R."/>
            <person name="Ma D."/>
            <person name="Qiang B."/>
            <person name="Wen Y."/>
            <person name="Hou Y."/>
            <person name="Yu J."/>
        </authorList>
    </citation>
    <scope>NUCLEOTIDE SEQUENCE [LARGE SCALE GENOMIC DNA]</scope>
    <source>
        <strain>301 / Serotype 2a</strain>
    </source>
</reference>
<reference key="4">
    <citation type="journal article" date="2003" name="Infect. Immun.">
        <title>Complete genome sequence and comparative genomics of Shigella flexneri serotype 2a strain 2457T.</title>
        <authorList>
            <person name="Wei J."/>
            <person name="Goldberg M.B."/>
            <person name="Burland V."/>
            <person name="Venkatesan M.M."/>
            <person name="Deng W."/>
            <person name="Fournier G."/>
            <person name="Mayhew G.F."/>
            <person name="Plunkett G. III"/>
            <person name="Rose D.J."/>
            <person name="Darling A."/>
            <person name="Mau B."/>
            <person name="Perna N.T."/>
            <person name="Payne S.M."/>
            <person name="Runyen-Janecky L.J."/>
            <person name="Zhou S."/>
            <person name="Schwartz D.C."/>
            <person name="Blattner F.R."/>
        </authorList>
    </citation>
    <scope>NUCLEOTIDE SEQUENCE [LARGE SCALE GENOMIC DNA]</scope>
    <source>
        <strain>ATCC 700930 / 2457T / Serotype 2a</strain>
    </source>
</reference>
<proteinExistence type="evidence at protein level"/>
<sequence>MNILLFGKTGQVGWELQRALAPLGNLIALDVHSTDYCGDFSNPEGVAETVKKIRPDVIVNAAAHTAVDKAESEPNFAQLLNATCVEAIAKAANEVGAWVIHYSTDYVFPGNGDTPWLETDATAPLNVYGETKLAGEKALQEHCAKHLIFRTSWVYAGKGNNFAKTMLRLAKEREELAVINDQFGAPTGAELLADCTAHAIRVAANKPEVAGLYHLVAGGTTTWHDYAALVFEEARRAGINLALNKLNAVPTTAYPTPARRPHNSRLNTEKFQQNFALVLPDWQVGVKRMLNELFTTTAI</sequence>
<accession>P37778</accession>
<accession>Q54163</accession>
<dbReference type="EC" id="1.1.1.133" evidence="1"/>
<dbReference type="EMBL" id="X71970">
    <property type="protein sequence ID" value="CAA50768.1"/>
    <property type="molecule type" value="Genomic_DNA"/>
</dbReference>
<dbReference type="EMBL" id="L14842">
    <property type="protein sequence ID" value="AAA53680.1"/>
    <property type="molecule type" value="Genomic_DNA"/>
</dbReference>
<dbReference type="EMBL" id="AE005674">
    <property type="protein sequence ID" value="AAN43642.1"/>
    <property type="molecule type" value="Genomic_DNA"/>
</dbReference>
<dbReference type="EMBL" id="AE014073">
    <property type="protein sequence ID" value="AAP17471.1"/>
    <property type="molecule type" value="Genomic_DNA"/>
</dbReference>
<dbReference type="PIR" id="C55213">
    <property type="entry name" value="C55213"/>
</dbReference>
<dbReference type="PIR" id="S41535">
    <property type="entry name" value="S41535"/>
</dbReference>
<dbReference type="RefSeq" id="NP_707935.1">
    <property type="nucleotide sequence ID" value="NC_004337.2"/>
</dbReference>
<dbReference type="RefSeq" id="WP_001023623.1">
    <property type="nucleotide sequence ID" value="NZ_WPGW01000076.1"/>
</dbReference>
<dbReference type="SMR" id="P37778"/>
<dbReference type="STRING" id="198214.SF2103"/>
<dbReference type="PaxDb" id="198214-SF2103"/>
<dbReference type="GeneID" id="1025316"/>
<dbReference type="KEGG" id="sfl:SF2103"/>
<dbReference type="KEGG" id="sfx:S2226"/>
<dbReference type="PATRIC" id="fig|198214.7.peg.2511"/>
<dbReference type="HOGENOM" id="CLU_045518_1_0_6"/>
<dbReference type="UniPathway" id="UPA00124"/>
<dbReference type="UniPathway" id="UPA00281"/>
<dbReference type="Proteomes" id="UP000001006">
    <property type="component" value="Chromosome"/>
</dbReference>
<dbReference type="Proteomes" id="UP000002673">
    <property type="component" value="Chromosome"/>
</dbReference>
<dbReference type="GO" id="GO:0005829">
    <property type="term" value="C:cytosol"/>
    <property type="evidence" value="ECO:0007669"/>
    <property type="project" value="TreeGrafter"/>
</dbReference>
<dbReference type="GO" id="GO:0008831">
    <property type="term" value="F:dTDP-4-dehydrorhamnose reductase activity"/>
    <property type="evidence" value="ECO:0000250"/>
    <property type="project" value="UniProtKB"/>
</dbReference>
<dbReference type="GO" id="GO:0046872">
    <property type="term" value="F:metal ion binding"/>
    <property type="evidence" value="ECO:0007669"/>
    <property type="project" value="UniProtKB-KW"/>
</dbReference>
<dbReference type="GO" id="GO:0019305">
    <property type="term" value="P:dTDP-rhamnose biosynthetic process"/>
    <property type="evidence" value="ECO:0007669"/>
    <property type="project" value="UniProtKB-UniPathway"/>
</dbReference>
<dbReference type="GO" id="GO:0009103">
    <property type="term" value="P:lipopolysaccharide biosynthetic process"/>
    <property type="evidence" value="ECO:0000250"/>
    <property type="project" value="UniProtKB"/>
</dbReference>
<dbReference type="GO" id="GO:0009243">
    <property type="term" value="P:O antigen biosynthetic process"/>
    <property type="evidence" value="ECO:0007669"/>
    <property type="project" value="UniProtKB-UniPathway"/>
</dbReference>
<dbReference type="GO" id="GO:0000271">
    <property type="term" value="P:polysaccharide biosynthetic process"/>
    <property type="evidence" value="ECO:0000250"/>
    <property type="project" value="UniProtKB"/>
</dbReference>
<dbReference type="CDD" id="cd05254">
    <property type="entry name" value="dTDP_HR_like_SDR_e"/>
    <property type="match status" value="1"/>
</dbReference>
<dbReference type="Gene3D" id="3.40.50.720">
    <property type="entry name" value="NAD(P)-binding Rossmann-like Domain"/>
    <property type="match status" value="1"/>
</dbReference>
<dbReference type="Gene3D" id="3.90.25.10">
    <property type="entry name" value="UDP-galactose 4-epimerase, domain 1"/>
    <property type="match status" value="1"/>
</dbReference>
<dbReference type="InterPro" id="IPR005913">
    <property type="entry name" value="dTDP_dehydrorham_reduct"/>
</dbReference>
<dbReference type="InterPro" id="IPR036291">
    <property type="entry name" value="NAD(P)-bd_dom_sf"/>
</dbReference>
<dbReference type="InterPro" id="IPR029903">
    <property type="entry name" value="RmlD-like-bd"/>
</dbReference>
<dbReference type="NCBIfam" id="NF007440">
    <property type="entry name" value="PRK09987.1"/>
    <property type="match status" value="1"/>
</dbReference>
<dbReference type="NCBIfam" id="TIGR01214">
    <property type="entry name" value="rmlD"/>
    <property type="match status" value="1"/>
</dbReference>
<dbReference type="PANTHER" id="PTHR10491">
    <property type="entry name" value="DTDP-4-DEHYDRORHAMNOSE REDUCTASE"/>
    <property type="match status" value="1"/>
</dbReference>
<dbReference type="PANTHER" id="PTHR10491:SF4">
    <property type="entry name" value="METHIONINE ADENOSYLTRANSFERASE 2 SUBUNIT BETA"/>
    <property type="match status" value="1"/>
</dbReference>
<dbReference type="Pfam" id="PF04321">
    <property type="entry name" value="RmlD_sub_bind"/>
    <property type="match status" value="1"/>
</dbReference>
<dbReference type="SUPFAM" id="SSF51735">
    <property type="entry name" value="NAD(P)-binding Rossmann-fold domains"/>
    <property type="match status" value="1"/>
</dbReference>
<organism>
    <name type="scientific">Shigella flexneri</name>
    <dbReference type="NCBI Taxonomy" id="623"/>
    <lineage>
        <taxon>Bacteria</taxon>
        <taxon>Pseudomonadati</taxon>
        <taxon>Pseudomonadota</taxon>
        <taxon>Gammaproteobacteria</taxon>
        <taxon>Enterobacterales</taxon>
        <taxon>Enterobacteriaceae</taxon>
        <taxon>Shigella</taxon>
    </lineage>
</organism>
<feature type="chain" id="PRO_0000207987" description="dTDP-4-dehydrorhamnose reductase">
    <location>
        <begin position="1"/>
        <end position="299"/>
    </location>
</feature>
<feature type="active site" description="Proton donor/acceptor" evidence="1">
    <location>
        <position position="128"/>
    </location>
</feature>
<feature type="binding site" evidence="1">
    <location>
        <begin position="10"/>
        <end position="12"/>
    </location>
    <ligand>
        <name>NADH</name>
        <dbReference type="ChEBI" id="CHEBI:57945"/>
    </ligand>
</feature>
<feature type="binding site" evidence="1">
    <location>
        <begin position="11"/>
        <end position="12"/>
    </location>
    <ligand>
        <name>NADPH</name>
        <dbReference type="ChEBI" id="CHEBI:57783"/>
    </ligand>
</feature>
<feature type="binding site" evidence="1">
    <location>
        <position position="30"/>
    </location>
    <ligand>
        <name>NADH</name>
        <dbReference type="ChEBI" id="CHEBI:57945"/>
    </ligand>
</feature>
<feature type="binding site" evidence="1">
    <location>
        <begin position="39"/>
        <end position="40"/>
    </location>
    <ligand>
        <name>NADH</name>
        <dbReference type="ChEBI" id="CHEBI:57945"/>
    </ligand>
</feature>
<feature type="binding site" evidence="1">
    <location>
        <begin position="39"/>
        <end position="40"/>
    </location>
    <ligand>
        <name>NADPH</name>
        <dbReference type="ChEBI" id="CHEBI:57783"/>
    </ligand>
</feature>
<feature type="binding site" evidence="1">
    <location>
        <begin position="63"/>
        <end position="65"/>
    </location>
    <ligand>
        <name>NADH</name>
        <dbReference type="ChEBI" id="CHEBI:57945"/>
    </ligand>
</feature>
<feature type="binding site" evidence="1">
    <location>
        <begin position="63"/>
        <end position="65"/>
    </location>
    <ligand>
        <name>NADPH</name>
        <dbReference type="ChEBI" id="CHEBI:57783"/>
    </ligand>
</feature>
<feature type="binding site" evidence="1">
    <location>
        <position position="102"/>
    </location>
    <ligand>
        <name>NADPH</name>
        <dbReference type="ChEBI" id="CHEBI:57783"/>
    </ligand>
</feature>
<feature type="binding site" evidence="1">
    <location>
        <begin position="104"/>
        <end position="105"/>
    </location>
    <ligand>
        <name>dTDP-beta-L-rhamnose</name>
        <dbReference type="ChEBI" id="CHEBI:57510"/>
    </ligand>
</feature>
<feature type="binding site" evidence="1">
    <location>
        <position position="128"/>
    </location>
    <ligand>
        <name>NADH</name>
        <dbReference type="ChEBI" id="CHEBI:57945"/>
    </ligand>
</feature>
<feature type="binding site" evidence="1">
    <location>
        <position position="128"/>
    </location>
    <ligand>
        <name>NADPH</name>
        <dbReference type="ChEBI" id="CHEBI:57783"/>
    </ligand>
</feature>
<feature type="binding site" evidence="1">
    <location>
        <position position="132"/>
    </location>
    <ligand>
        <name>NADH</name>
        <dbReference type="ChEBI" id="CHEBI:57945"/>
    </ligand>
</feature>
<feature type="binding site" evidence="1">
    <location>
        <position position="132"/>
    </location>
    <ligand>
        <name>NADPH</name>
        <dbReference type="ChEBI" id="CHEBI:57783"/>
    </ligand>
</feature>
<feature type="binding site" evidence="1">
    <location>
        <position position="153"/>
    </location>
    <ligand>
        <name>dTDP-beta-L-rhamnose</name>
        <dbReference type="ChEBI" id="CHEBI:57510"/>
    </ligand>
</feature>
<feature type="site" description="Could provide a fine-tuning to achieve optimal pKa matching between active site and substrate" evidence="1">
    <location>
        <position position="104"/>
    </location>
</feature>
<feature type="sequence conflict" description="In Ref. 1; CAA50768." evidence="5" ref="1">
    <original>A</original>
    <variation>I</variation>
    <location>
        <position position="89"/>
    </location>
</feature>
<feature type="sequence conflict" description="In Ref. 1; CAA50768." evidence="5" ref="1">
    <original>P</original>
    <variation>A</variation>
    <location>
        <position position="115"/>
    </location>
</feature>
<feature type="sequence conflict" description="In Ref. 1; CAA50768." evidence="5" ref="1">
    <original>E</original>
    <variation>G</variation>
    <location>
        <position position="130"/>
    </location>
</feature>
<feature type="sequence conflict" description="In Ref. 1; CAA50768." evidence="5" ref="1">
    <original>GE</original>
    <variation>WG</variation>
    <location>
        <begin position="135"/>
        <end position="136"/>
    </location>
</feature>
<feature type="sequence conflict" description="In Ref. 1; CAA50768." evidence="5" ref="1">
    <original>E</original>
    <variation>D</variation>
    <location>
        <position position="141"/>
    </location>
</feature>
<feature type="sequence conflict" description="In Ref. 1; CAA50768." evidence="5" ref="1">
    <original>A</original>
    <variation>G</variation>
    <location>
        <position position="144"/>
    </location>
</feature>
<feature type="sequence conflict" description="In Ref. 1; CAA50768." evidence="5" ref="1">
    <original>E</original>
    <variation>D</variation>
    <location>
        <position position="172"/>
    </location>
</feature>
<feature type="sequence conflict" description="In Ref. 1; CAA50768." evidence="5" ref="1">
    <original>E</original>
    <variation>T</variation>
    <location>
        <position position="175"/>
    </location>
</feature>
<feature type="sequence conflict" description="In Ref. 1; CAA50768." evidence="5" ref="1">
    <original>N</original>
    <variation>T</variation>
    <location>
        <position position="180"/>
    </location>
</feature>
<feature type="sequence conflict" description="In Ref. 1; CAA50768." evidence="5" ref="1">
    <original>E</original>
    <variation>LD</variation>
    <location>
        <position position="190"/>
    </location>
</feature>
<feature type="sequence conflict" description="In Ref. 1; CAA50768." evidence="5" ref="1">
    <original>A</original>
    <variation>R</variation>
    <location>
        <position position="197"/>
    </location>
</feature>
<feature type="sequence conflict" description="In Ref. 1; CAA50768." evidence="5" ref="1">
    <original>RV</original>
    <variation>WL</variation>
    <location>
        <begin position="201"/>
        <end position="202"/>
    </location>
</feature>
<feature type="sequence conflict" description="In Ref. 1; CAA50768." evidence="5" ref="1">
    <original>A</original>
    <variation>P</variation>
    <location>
        <position position="227"/>
    </location>
</feature>
<feature type="sequence conflict" description="In Ref. 1; CAA50768." evidence="5" ref="1">
    <original>E</original>
    <variation>K</variation>
    <location>
        <position position="232"/>
    </location>
</feature>
<feature type="sequence conflict" description="In Ref. 1; CAA50768." evidence="5" ref="1">
    <original>I</original>
    <variation>F</variation>
    <location>
        <position position="239"/>
    </location>
</feature>
<feature type="sequence conflict" description="In Ref. 1; CAA50768." evidence="5" ref="1">
    <original>A</original>
    <variation>P</variation>
    <location>
        <position position="242"/>
    </location>
</feature>
<feature type="sequence conflict" description="In Ref. 1; CAA50768." evidence="5" ref="1">
    <original>R</original>
    <variation>G</variation>
    <location>
        <position position="260"/>
    </location>
</feature>
<feature type="sequence conflict" description="In Ref. 1; CAA50768." evidence="5" ref="1">
    <original>S</original>
    <variation>F</variation>
    <location>
        <position position="264"/>
    </location>
</feature>
<evidence type="ECO:0000250" key="1">
    <source>
        <dbReference type="UniProtKB" id="P26392"/>
    </source>
</evidence>
<evidence type="ECO:0000250" key="2">
    <source>
        <dbReference type="UniProtKB" id="P37760"/>
    </source>
</evidence>
<evidence type="ECO:0000269" key="3">
    <source>
    </source>
</evidence>
<evidence type="ECO:0000303" key="4">
    <source>
    </source>
</evidence>
<evidence type="ECO:0000305" key="5"/>
<evidence type="ECO:0000305" key="6">
    <source>
    </source>
</evidence>
<name>RMLD_SHIFL</name>